<accession>B3Q969</accession>
<sequence length="362" mass="39044">MAQHDPIGLIAPNAGLAQLNERSREIFRQIVESYLATGEPVGSRNISRLISVPLSPASVRNVMADLEQLGLIYAPHTSAGRLPTELGLRFFVDALMQIGDLTEPERQSIQAQLSSVGRAHTVEAALGEALTRLSGLTRAAAVVLTAKANVRLKHIEFVRLEPERALVILVAEDGQVENRVLTLPPGVPSSALIEAANYLNARIRGRTLAEARLELESLMVQNKAELDQLTQKVIAAGIASWSGGDGEDRQLIVRGHANLLEDLHALDDLERVRLLFDDLETKRGVIDLLGRAESADGVRIFIGSENKLFSLSGSSTIIAPYSDGAGHIVGVLGVIGPTRLNYARVIPMVDYTARIVSRMLGG</sequence>
<dbReference type="EMBL" id="CP001096">
    <property type="protein sequence ID" value="ACE98893.1"/>
    <property type="molecule type" value="Genomic_DNA"/>
</dbReference>
<dbReference type="RefSeq" id="WP_011155898.1">
    <property type="nucleotide sequence ID" value="NC_011004.1"/>
</dbReference>
<dbReference type="SMR" id="B3Q969"/>
<dbReference type="GeneID" id="66891341"/>
<dbReference type="KEGG" id="rpt:Rpal_0333"/>
<dbReference type="HOGENOM" id="CLU_050019_0_0_5"/>
<dbReference type="OrthoDB" id="9783139at2"/>
<dbReference type="Proteomes" id="UP000001725">
    <property type="component" value="Chromosome"/>
</dbReference>
<dbReference type="GO" id="GO:0003677">
    <property type="term" value="F:DNA binding"/>
    <property type="evidence" value="ECO:0007669"/>
    <property type="project" value="InterPro"/>
</dbReference>
<dbReference type="GO" id="GO:0045892">
    <property type="term" value="P:negative regulation of DNA-templated transcription"/>
    <property type="evidence" value="ECO:0007669"/>
    <property type="project" value="UniProtKB-UniRule"/>
</dbReference>
<dbReference type="Gene3D" id="3.30.450.40">
    <property type="match status" value="1"/>
</dbReference>
<dbReference type="Gene3D" id="1.10.10.10">
    <property type="entry name" value="Winged helix-like DNA-binding domain superfamily/Winged helix DNA-binding domain"/>
    <property type="match status" value="1"/>
</dbReference>
<dbReference type="HAMAP" id="MF_00081">
    <property type="entry name" value="HrcA"/>
    <property type="match status" value="1"/>
</dbReference>
<dbReference type="InterPro" id="IPR029016">
    <property type="entry name" value="GAF-like_dom_sf"/>
</dbReference>
<dbReference type="InterPro" id="IPR002571">
    <property type="entry name" value="HrcA"/>
</dbReference>
<dbReference type="InterPro" id="IPR021153">
    <property type="entry name" value="HrcA_C"/>
</dbReference>
<dbReference type="InterPro" id="IPR036388">
    <property type="entry name" value="WH-like_DNA-bd_sf"/>
</dbReference>
<dbReference type="InterPro" id="IPR036390">
    <property type="entry name" value="WH_DNA-bd_sf"/>
</dbReference>
<dbReference type="NCBIfam" id="TIGR00331">
    <property type="entry name" value="hrcA"/>
    <property type="match status" value="1"/>
</dbReference>
<dbReference type="PANTHER" id="PTHR34824">
    <property type="entry name" value="HEAT-INDUCIBLE TRANSCRIPTION REPRESSOR HRCA"/>
    <property type="match status" value="1"/>
</dbReference>
<dbReference type="PANTHER" id="PTHR34824:SF1">
    <property type="entry name" value="HEAT-INDUCIBLE TRANSCRIPTION REPRESSOR HRCA"/>
    <property type="match status" value="1"/>
</dbReference>
<dbReference type="Pfam" id="PF01628">
    <property type="entry name" value="HrcA"/>
    <property type="match status" value="1"/>
</dbReference>
<dbReference type="PIRSF" id="PIRSF005485">
    <property type="entry name" value="HrcA"/>
    <property type="match status" value="1"/>
</dbReference>
<dbReference type="SUPFAM" id="SSF55781">
    <property type="entry name" value="GAF domain-like"/>
    <property type="match status" value="1"/>
</dbReference>
<dbReference type="SUPFAM" id="SSF46785">
    <property type="entry name" value="Winged helix' DNA-binding domain"/>
    <property type="match status" value="1"/>
</dbReference>
<evidence type="ECO:0000255" key="1">
    <source>
        <dbReference type="HAMAP-Rule" id="MF_00081"/>
    </source>
</evidence>
<comment type="function">
    <text evidence="1">Negative regulator of class I heat shock genes (grpE-dnaK-dnaJ and groELS operons). Prevents heat-shock induction of these operons.</text>
</comment>
<comment type="similarity">
    <text evidence="1">Belongs to the HrcA family.</text>
</comment>
<reference key="1">
    <citation type="submission" date="2008-05" db="EMBL/GenBank/DDBJ databases">
        <title>Complete sequence of Rhodopseudomonas palustris TIE-1.</title>
        <authorList>
            <consortium name="US DOE Joint Genome Institute"/>
            <person name="Lucas S."/>
            <person name="Copeland A."/>
            <person name="Lapidus A."/>
            <person name="Glavina del Rio T."/>
            <person name="Dalin E."/>
            <person name="Tice H."/>
            <person name="Pitluck S."/>
            <person name="Chain P."/>
            <person name="Malfatti S."/>
            <person name="Shin M."/>
            <person name="Vergez L."/>
            <person name="Lang D."/>
            <person name="Schmutz J."/>
            <person name="Larimer F."/>
            <person name="Land M."/>
            <person name="Hauser L."/>
            <person name="Kyrpides N."/>
            <person name="Mikhailova N."/>
            <person name="Emerson D."/>
            <person name="Newman D.K."/>
            <person name="Roden E."/>
            <person name="Richardson P."/>
        </authorList>
    </citation>
    <scope>NUCLEOTIDE SEQUENCE [LARGE SCALE GENOMIC DNA]</scope>
    <source>
        <strain>TIE-1</strain>
    </source>
</reference>
<gene>
    <name evidence="1" type="primary">hrcA</name>
    <name type="ordered locus">Rpal_0333</name>
</gene>
<feature type="chain" id="PRO_1000092829" description="Heat-inducible transcription repressor HrcA">
    <location>
        <begin position="1"/>
        <end position="362"/>
    </location>
</feature>
<name>HRCA_RHOPT</name>
<protein>
    <recommendedName>
        <fullName evidence="1">Heat-inducible transcription repressor HrcA</fullName>
    </recommendedName>
</protein>
<proteinExistence type="inferred from homology"/>
<organism>
    <name type="scientific">Rhodopseudomonas palustris (strain TIE-1)</name>
    <dbReference type="NCBI Taxonomy" id="395960"/>
    <lineage>
        <taxon>Bacteria</taxon>
        <taxon>Pseudomonadati</taxon>
        <taxon>Pseudomonadota</taxon>
        <taxon>Alphaproteobacteria</taxon>
        <taxon>Hyphomicrobiales</taxon>
        <taxon>Nitrobacteraceae</taxon>
        <taxon>Rhodopseudomonas</taxon>
    </lineage>
</organism>
<keyword id="KW-0678">Repressor</keyword>
<keyword id="KW-0346">Stress response</keyword>
<keyword id="KW-0804">Transcription</keyword>
<keyword id="KW-0805">Transcription regulation</keyword>